<gene>
    <name type="primary">fbiC</name>
    <name type="ordered locus">Rv1173</name>
</gene>
<dbReference type="EC" id="4.3.1.32"/>
<dbReference type="EC" id="2.5.1.147"/>
<dbReference type="EMBL" id="AL123456">
    <property type="protein sequence ID" value="CCP43929.1"/>
    <property type="molecule type" value="Genomic_DNA"/>
</dbReference>
<dbReference type="PIR" id="E70875">
    <property type="entry name" value="E70875"/>
</dbReference>
<dbReference type="RefSeq" id="NP_215689.1">
    <property type="nucleotide sequence ID" value="NC_000962.3"/>
</dbReference>
<dbReference type="RefSeq" id="WP_003406167.1">
    <property type="nucleotide sequence ID" value="NZ_NVQJ01000025.1"/>
</dbReference>
<dbReference type="SMR" id="P9WP77"/>
<dbReference type="STRING" id="83332.Rv1173"/>
<dbReference type="PaxDb" id="83332-Rv1173"/>
<dbReference type="GeneID" id="886061"/>
<dbReference type="KEGG" id="mtu:Rv1173"/>
<dbReference type="KEGG" id="mtv:RVBD_1173"/>
<dbReference type="TubercuList" id="Rv1173"/>
<dbReference type="eggNOG" id="COG1060">
    <property type="taxonomic scope" value="Bacteria"/>
</dbReference>
<dbReference type="InParanoid" id="P9WP77"/>
<dbReference type="OrthoDB" id="9802027at2"/>
<dbReference type="PhylomeDB" id="P9WP77"/>
<dbReference type="UniPathway" id="UPA00072"/>
<dbReference type="Proteomes" id="UP000001584">
    <property type="component" value="Chromosome"/>
</dbReference>
<dbReference type="GO" id="GO:0005886">
    <property type="term" value="C:plasma membrane"/>
    <property type="evidence" value="ECO:0007005"/>
    <property type="project" value="MTBBASE"/>
</dbReference>
<dbReference type="GO" id="GO:0051539">
    <property type="term" value="F:4 iron, 4 sulfur cluster binding"/>
    <property type="evidence" value="ECO:0007669"/>
    <property type="project" value="UniProtKB-KW"/>
</dbReference>
<dbReference type="GO" id="GO:0141093">
    <property type="term" value="F:5-amino-6-(D-ribitylamino)uracil--L-tyrosine 4-hydroxyphenyl transferase activity"/>
    <property type="evidence" value="ECO:0007669"/>
    <property type="project" value="UniProtKB-EC"/>
</dbReference>
<dbReference type="GO" id="GO:0044689">
    <property type="term" value="F:7,8-didemethyl-8-hydroxy-5-deazariboflavin synthase activity"/>
    <property type="evidence" value="ECO:0000318"/>
    <property type="project" value="GO_Central"/>
</dbReference>
<dbReference type="GO" id="GO:0046872">
    <property type="term" value="F:metal ion binding"/>
    <property type="evidence" value="ECO:0007669"/>
    <property type="project" value="UniProtKB-KW"/>
</dbReference>
<dbReference type="GO" id="GO:2001121">
    <property type="term" value="P:coenzyme gamma-F420-2 biosynthetic process"/>
    <property type="evidence" value="ECO:0000315"/>
    <property type="project" value="MTBBASE"/>
</dbReference>
<dbReference type="GO" id="GO:0051409">
    <property type="term" value="P:response to nitrosative stress"/>
    <property type="evidence" value="ECO:0000315"/>
    <property type="project" value="MTBBASE"/>
</dbReference>
<dbReference type="CDD" id="cd01335">
    <property type="entry name" value="Radical_SAM"/>
    <property type="match status" value="2"/>
</dbReference>
<dbReference type="FunFam" id="3.20.20.70:FF:000134">
    <property type="entry name" value="7,8-didemethyl-8-hydroxy-5-deazariboflavin synthase"/>
    <property type="match status" value="1"/>
</dbReference>
<dbReference type="Gene3D" id="3.20.20.70">
    <property type="entry name" value="Aldolase class I"/>
    <property type="match status" value="2"/>
</dbReference>
<dbReference type="HAMAP" id="MF_01611">
    <property type="entry name" value="FO_synth_sub1"/>
    <property type="match status" value="1"/>
</dbReference>
<dbReference type="HAMAP" id="MF_01612">
    <property type="entry name" value="FO_synth_sub2"/>
    <property type="match status" value="1"/>
</dbReference>
<dbReference type="InterPro" id="IPR013785">
    <property type="entry name" value="Aldolase_TIM"/>
</dbReference>
<dbReference type="InterPro" id="IPR019939">
    <property type="entry name" value="CofG_family"/>
</dbReference>
<dbReference type="InterPro" id="IPR045567">
    <property type="entry name" value="CofH/MnqC-like_C"/>
</dbReference>
<dbReference type="InterPro" id="IPR019940">
    <property type="entry name" value="CofH_family"/>
</dbReference>
<dbReference type="InterPro" id="IPR006638">
    <property type="entry name" value="Elp3/MiaA/NifB-like_rSAM"/>
</dbReference>
<dbReference type="InterPro" id="IPR034405">
    <property type="entry name" value="F420"/>
</dbReference>
<dbReference type="InterPro" id="IPR020050">
    <property type="entry name" value="FO_synthase_su2"/>
</dbReference>
<dbReference type="InterPro" id="IPR007197">
    <property type="entry name" value="rSAM"/>
</dbReference>
<dbReference type="NCBIfam" id="TIGR00423">
    <property type="entry name" value="CofH family radical SAM protein"/>
    <property type="match status" value="1"/>
</dbReference>
<dbReference type="NCBIfam" id="TIGR03550">
    <property type="entry name" value="F420_cofG"/>
    <property type="match status" value="1"/>
</dbReference>
<dbReference type="NCBIfam" id="TIGR03551">
    <property type="entry name" value="F420_cofH"/>
    <property type="match status" value="1"/>
</dbReference>
<dbReference type="NCBIfam" id="NF004884">
    <property type="entry name" value="PRK06245.1"/>
    <property type="match status" value="1"/>
</dbReference>
<dbReference type="NCBIfam" id="NF005609">
    <property type="entry name" value="PRK07360.1"/>
    <property type="match status" value="1"/>
</dbReference>
<dbReference type="NCBIfam" id="NF006687">
    <property type="entry name" value="PRK09234.1"/>
    <property type="match status" value="1"/>
</dbReference>
<dbReference type="PANTHER" id="PTHR43076">
    <property type="entry name" value="FO SYNTHASE (COFH)"/>
    <property type="match status" value="1"/>
</dbReference>
<dbReference type="PANTHER" id="PTHR43076:SF1">
    <property type="entry name" value="LIPOYL SYNTHASE 2"/>
    <property type="match status" value="1"/>
</dbReference>
<dbReference type="Pfam" id="PF19288">
    <property type="entry name" value="CofH_C"/>
    <property type="match status" value="1"/>
</dbReference>
<dbReference type="Pfam" id="PF04055">
    <property type="entry name" value="Radical_SAM"/>
    <property type="match status" value="2"/>
</dbReference>
<dbReference type="SFLD" id="SFLDF00293">
    <property type="entry name" value="((2_3_4_5-tetrahydroxypentyl)a"/>
    <property type="match status" value="1"/>
</dbReference>
<dbReference type="SFLD" id="SFLDF00294">
    <property type="entry name" value="7_8-didemethyl-8-hydroxy-5-dea"/>
    <property type="match status" value="1"/>
</dbReference>
<dbReference type="SFLD" id="SFLDG01388">
    <property type="entry name" value="7_8-didemethyl-8-hydroxy-5-dea"/>
    <property type="match status" value="1"/>
</dbReference>
<dbReference type="SFLD" id="SFLDF00343">
    <property type="entry name" value="aminofutalosine_synthase_(mqnE"/>
    <property type="match status" value="1"/>
</dbReference>
<dbReference type="SFLD" id="SFLDG01064">
    <property type="entry name" value="F420__menaquinone_cofactor_bio"/>
    <property type="match status" value="1"/>
</dbReference>
<dbReference type="SFLD" id="SFLDS00029">
    <property type="entry name" value="Radical_SAM"/>
    <property type="match status" value="1"/>
</dbReference>
<dbReference type="SMART" id="SM00729">
    <property type="entry name" value="Elp3"/>
    <property type="match status" value="1"/>
</dbReference>
<dbReference type="SUPFAM" id="SSF102114">
    <property type="entry name" value="Radical SAM enzymes"/>
    <property type="match status" value="2"/>
</dbReference>
<dbReference type="PROSITE" id="PS51918">
    <property type="entry name" value="RADICAL_SAM"/>
    <property type="match status" value="2"/>
</dbReference>
<feature type="chain" id="PRO_0000147772" description="FO synthase">
    <location>
        <begin position="1"/>
        <end position="856"/>
    </location>
</feature>
<feature type="domain" description="Radical SAM core 1" evidence="2">
    <location>
        <begin position="84"/>
        <end position="336"/>
    </location>
</feature>
<feature type="domain" description="Radical SAM core 2" evidence="2">
    <location>
        <begin position="544"/>
        <end position="785"/>
    </location>
</feature>
<feature type="region of interest" description="CofG-like">
    <location>
        <begin position="85"/>
        <end position="417"/>
    </location>
</feature>
<feature type="region of interest" description="CofH-like">
    <location>
        <begin position="521"/>
        <end position="854"/>
    </location>
</feature>
<feature type="binding site" evidence="1">
    <location>
        <position position="98"/>
    </location>
    <ligand>
        <name>[4Fe-4S] cluster</name>
        <dbReference type="ChEBI" id="CHEBI:49883"/>
        <label>1</label>
        <note>4Fe-4S-S-AdoMet</note>
    </ligand>
</feature>
<feature type="binding site" evidence="1">
    <location>
        <position position="102"/>
    </location>
    <ligand>
        <name>[4Fe-4S] cluster</name>
        <dbReference type="ChEBI" id="CHEBI:49883"/>
        <label>1</label>
        <note>4Fe-4S-S-AdoMet</note>
    </ligand>
</feature>
<feature type="binding site" evidence="1">
    <location>
        <position position="105"/>
    </location>
    <ligand>
        <name>[4Fe-4S] cluster</name>
        <dbReference type="ChEBI" id="CHEBI:49883"/>
        <label>1</label>
        <note>4Fe-4S-S-AdoMet</note>
    </ligand>
</feature>
<feature type="binding site" evidence="1">
    <location>
        <position position="558"/>
    </location>
    <ligand>
        <name>[4Fe-4S] cluster</name>
        <dbReference type="ChEBI" id="CHEBI:49883"/>
        <label>2</label>
        <note>4Fe-4S-S-AdoMet</note>
    </ligand>
</feature>
<feature type="binding site" evidence="1">
    <location>
        <position position="562"/>
    </location>
    <ligand>
        <name>[4Fe-4S] cluster</name>
        <dbReference type="ChEBI" id="CHEBI:49883"/>
        <label>2</label>
        <note>4Fe-4S-S-AdoMet</note>
    </ligand>
</feature>
<feature type="binding site" evidence="1">
    <location>
        <position position="565"/>
    </location>
    <ligand>
        <name>[4Fe-4S] cluster</name>
        <dbReference type="ChEBI" id="CHEBI:49883"/>
        <label>2</label>
        <note>4Fe-4S-S-AdoMet</note>
    </ligand>
</feature>
<sequence>MPQPVGRKSTALPSPVVPPQANASALRRVLRRARDGVTLNVDEAAIAMTARGDELADLCASAARVRDAGLVSAGRHGPSGRLAISYSRKVFIPVTRLCRDNCHYCTFVTVPGKLRAQGSSTYMEPDEILDVARRGAEFGCKEALFTLGDRPEARWRQAREWLGERGYDSTLSYVRAMAIRVLEQTGLLPHLNPGVMSWSEMSRLKPVAPSMGMMLETTSRRLFETKGLAHYGSPDKDPAVRLRVLTDAGRLSIPFTTGLLVGIGETLSERADTLHAIRKSHKEFGHIQEVIVQNFRAKEHTAMAAFPDAGIEDYLATVAVARLVLGPGMRIQAPPNLVSGDECRALVGAGVDDWGGVSPLTPDHVNPERPWPALDELAAVTAEAGYDMVQRLTAQPKYVQAGAAWIDPRVRGHVVALADPATGLARDVNPVGMPWQEPDDVASWGRVDLGAAIDTQGRNTAVRSDLASAFGDWESIREQVHELAVRAPERIDTDVLAALRSAERAPAGCTDGEYLALATADGPALEAVAALADSLRRDVVGDEVTFVVNRNINFTNICYTGCRFCAFAQRKGDADAYSLSVGEVADRAWEAHVAGATEVCMQGGIDPELPVTGYADLVRAVKARVPSMHVHAFSPMEIANGVTKSGLSIREWLIGLREAGLDTIPGTAAEILDDEVRWVLTKGKLPTSLWIEIVTTAHEVGLRSSSTMMYGHVDSPRHWVAHLNVLRDIQDRTGGFTEFVPLPFVHQNSPLYLAGAARPGPSHRDNRAVHALARIMLHGRISHIQTSWVKLGVRRTQVMLEGGANDLGGTLMEETISRMAGSEHGSAKTVAELVAIAEGIGRPARQRTTTYALLAA</sequence>
<proteinExistence type="evidence at protein level"/>
<comment type="function">
    <text>Catalyzes the radical-mediated synthesis of 7,8-didemethyl-8-hydroxy-5-deazariboflavin (FO) from 5-amino-6-(D-ribitylamino)uracil and L-tyrosine.</text>
</comment>
<comment type="catalytic activity">
    <reaction>
        <text>5-amino-6-(D-ribitylamino)uracil + L-tyrosine + S-adenosyl-L-methionine = 5-amino-5-(4-hydroxybenzyl)-6-(D-ribitylimino)-5,6-dihydrouracil + 2-iminoacetate + 5'-deoxyadenosine + L-methionine + H(+)</text>
        <dbReference type="Rhea" id="RHEA:55200"/>
        <dbReference type="ChEBI" id="CHEBI:15378"/>
        <dbReference type="ChEBI" id="CHEBI:15934"/>
        <dbReference type="ChEBI" id="CHEBI:17319"/>
        <dbReference type="ChEBI" id="CHEBI:57844"/>
        <dbReference type="ChEBI" id="CHEBI:58315"/>
        <dbReference type="ChEBI" id="CHEBI:59789"/>
        <dbReference type="ChEBI" id="CHEBI:77846"/>
        <dbReference type="ChEBI" id="CHEBI:85936"/>
        <dbReference type="EC" id="2.5.1.147"/>
    </reaction>
</comment>
<comment type="catalytic activity">
    <reaction>
        <text>5-amino-5-(4-hydroxybenzyl)-6-(D-ribitylimino)-5,6-dihydrouracil + S-adenosyl-L-methionine = 7,8-didemethyl-8-hydroxy-5-deazariboflavin + 5'-deoxyadenosine + L-methionine + NH4(+) + H(+)</text>
        <dbReference type="Rhea" id="RHEA:55204"/>
        <dbReference type="ChEBI" id="CHEBI:15378"/>
        <dbReference type="ChEBI" id="CHEBI:17319"/>
        <dbReference type="ChEBI" id="CHEBI:28938"/>
        <dbReference type="ChEBI" id="CHEBI:57844"/>
        <dbReference type="ChEBI" id="CHEBI:59789"/>
        <dbReference type="ChEBI" id="CHEBI:59904"/>
        <dbReference type="ChEBI" id="CHEBI:85936"/>
        <dbReference type="EC" id="4.3.1.32"/>
    </reaction>
</comment>
<comment type="cofactor">
    <cofactor evidence="1">
        <name>[4Fe-4S] cluster</name>
        <dbReference type="ChEBI" id="CHEBI:49883"/>
    </cofactor>
    <text evidence="1">Binds 2 [4Fe-4S] clusters. The clusters are coordinated with 3 cysteines and an exchangeable S-adenosyl-L-methionine.</text>
</comment>
<comment type="pathway">
    <text>Cofactor biosynthesis; coenzyme F0 biosynthesis.</text>
</comment>
<comment type="similarity">
    <text evidence="3">In the N-terminal section; belongs to the radical SAM superfamily. CofG family.</text>
</comment>
<comment type="similarity">
    <text evidence="3">In the C-terminal section; belongs to the radical SAM superfamily. CofH family.</text>
</comment>
<name>FBIC_MYCTU</name>
<reference key="1">
    <citation type="journal article" date="1998" name="Nature">
        <title>Deciphering the biology of Mycobacterium tuberculosis from the complete genome sequence.</title>
        <authorList>
            <person name="Cole S.T."/>
            <person name="Brosch R."/>
            <person name="Parkhill J."/>
            <person name="Garnier T."/>
            <person name="Churcher C.M."/>
            <person name="Harris D.E."/>
            <person name="Gordon S.V."/>
            <person name="Eiglmeier K."/>
            <person name="Gas S."/>
            <person name="Barry C.E. III"/>
            <person name="Tekaia F."/>
            <person name="Badcock K."/>
            <person name="Basham D."/>
            <person name="Brown D."/>
            <person name="Chillingworth T."/>
            <person name="Connor R."/>
            <person name="Davies R.M."/>
            <person name="Devlin K."/>
            <person name="Feltwell T."/>
            <person name="Gentles S."/>
            <person name="Hamlin N."/>
            <person name="Holroyd S."/>
            <person name="Hornsby T."/>
            <person name="Jagels K."/>
            <person name="Krogh A."/>
            <person name="McLean J."/>
            <person name="Moule S."/>
            <person name="Murphy L.D."/>
            <person name="Oliver S."/>
            <person name="Osborne J."/>
            <person name="Quail M.A."/>
            <person name="Rajandream M.A."/>
            <person name="Rogers J."/>
            <person name="Rutter S."/>
            <person name="Seeger K."/>
            <person name="Skelton S."/>
            <person name="Squares S."/>
            <person name="Squares R."/>
            <person name="Sulston J.E."/>
            <person name="Taylor K."/>
            <person name="Whitehead S."/>
            <person name="Barrell B.G."/>
        </authorList>
    </citation>
    <scope>NUCLEOTIDE SEQUENCE [LARGE SCALE GENOMIC DNA]</scope>
    <source>
        <strain>ATCC 25618 / H37Rv</strain>
    </source>
</reference>
<reference key="2">
    <citation type="journal article" date="2011" name="Mol. Cell. Proteomics">
        <title>Proteogenomic analysis of Mycobacterium tuberculosis by high resolution mass spectrometry.</title>
        <authorList>
            <person name="Kelkar D.S."/>
            <person name="Kumar D."/>
            <person name="Kumar P."/>
            <person name="Balakrishnan L."/>
            <person name="Muthusamy B."/>
            <person name="Yadav A.K."/>
            <person name="Shrivastava P."/>
            <person name="Marimuthu A."/>
            <person name="Anand S."/>
            <person name="Sundaram H."/>
            <person name="Kingsbury R."/>
            <person name="Harsha H.C."/>
            <person name="Nair B."/>
            <person name="Prasad T.S."/>
            <person name="Chauhan D.S."/>
            <person name="Katoch K."/>
            <person name="Katoch V.M."/>
            <person name="Kumar P."/>
            <person name="Chaerkady R."/>
            <person name="Ramachandran S."/>
            <person name="Dash D."/>
            <person name="Pandey A."/>
        </authorList>
    </citation>
    <scope>IDENTIFICATION BY MASS SPECTROMETRY [LARGE SCALE ANALYSIS]</scope>
    <source>
        <strain>ATCC 25618 / H37Rv</strain>
    </source>
</reference>
<keyword id="KW-0004">4Fe-4S</keyword>
<keyword id="KW-0408">Iron</keyword>
<keyword id="KW-0411">Iron-sulfur</keyword>
<keyword id="KW-0456">Lyase</keyword>
<keyword id="KW-0479">Metal-binding</keyword>
<keyword id="KW-1185">Reference proteome</keyword>
<keyword id="KW-0949">S-adenosyl-L-methionine</keyword>
<keyword id="KW-0808">Transferase</keyword>
<accession>P9WP77</accession>
<accession>L0T8M8</accession>
<accession>O50429</accession>
<accession>Q7D8P7</accession>
<organism>
    <name type="scientific">Mycobacterium tuberculosis (strain ATCC 25618 / H37Rv)</name>
    <dbReference type="NCBI Taxonomy" id="83332"/>
    <lineage>
        <taxon>Bacteria</taxon>
        <taxon>Bacillati</taxon>
        <taxon>Actinomycetota</taxon>
        <taxon>Actinomycetes</taxon>
        <taxon>Mycobacteriales</taxon>
        <taxon>Mycobacteriaceae</taxon>
        <taxon>Mycobacterium</taxon>
        <taxon>Mycobacterium tuberculosis complex</taxon>
    </lineage>
</organism>
<evidence type="ECO:0000250" key="1"/>
<evidence type="ECO:0000255" key="2">
    <source>
        <dbReference type="PROSITE-ProRule" id="PRU01266"/>
    </source>
</evidence>
<evidence type="ECO:0000305" key="3"/>
<protein>
    <recommendedName>
        <fullName>FO synthase</fullName>
    </recommendedName>
    <domain>
        <recommendedName>
            <fullName>7,8-didemethyl-8-hydroxy-5-deazariboflavin synthase</fullName>
            <ecNumber>4.3.1.32</ecNumber>
        </recommendedName>
    </domain>
    <domain>
        <recommendedName>
            <fullName>5-amino-6-(D-ribitylamino)uracil--L-tyrosine 4-hydroxyphenyl transferase</fullName>
            <ecNumber>2.5.1.147</ecNumber>
        </recommendedName>
    </domain>
</protein>